<name>ASZ1_PAPAN</name>
<keyword id="KW-0040">ANK repeat</keyword>
<keyword id="KW-0963">Cytoplasm</keyword>
<keyword id="KW-0217">Developmental protein</keyword>
<keyword id="KW-0221">Differentiation</keyword>
<keyword id="KW-0469">Meiosis</keyword>
<keyword id="KW-0597">Phosphoprotein</keyword>
<keyword id="KW-1185">Reference proteome</keyword>
<keyword id="KW-0677">Repeat</keyword>
<keyword id="KW-0943">RNA-mediated gene silencing</keyword>
<keyword id="KW-0744">Spermatogenesis</keyword>
<organism>
    <name type="scientific">Papio anubis</name>
    <name type="common">Olive baboon</name>
    <dbReference type="NCBI Taxonomy" id="9555"/>
    <lineage>
        <taxon>Eukaryota</taxon>
        <taxon>Metazoa</taxon>
        <taxon>Chordata</taxon>
        <taxon>Craniata</taxon>
        <taxon>Vertebrata</taxon>
        <taxon>Euteleostomi</taxon>
        <taxon>Mammalia</taxon>
        <taxon>Eutheria</taxon>
        <taxon>Euarchontoglires</taxon>
        <taxon>Primates</taxon>
        <taxon>Haplorrhini</taxon>
        <taxon>Catarrhini</taxon>
        <taxon>Cercopithecidae</taxon>
        <taxon>Cercopithecinae</taxon>
        <taxon>Papio</taxon>
    </lineage>
</organism>
<reference key="1">
    <citation type="journal article" date="2002" name="Mol. Endocrinol.">
        <title>Identification of Gasz, an evolutionarily conserved gene expressed exclusively in germ cells and encoding a protein with four ankyrin repeats, a sterile-alpha motif, and a basic leucine zipper.</title>
        <authorList>
            <person name="Yan W."/>
            <person name="Rajkovic A."/>
            <person name="Viveiros M.M."/>
            <person name="Burns K.H."/>
            <person name="Eppig J.J."/>
            <person name="Matzuk M.M."/>
        </authorList>
    </citation>
    <scope>NUCLEOTIDE SEQUENCE [MRNA]</scope>
</reference>
<reference key="2">
    <citation type="journal article" date="2003" name="Nature">
        <title>Comparative analyses of multi-species sequences from targeted genomic regions.</title>
        <authorList>
            <person name="Thomas J.W."/>
            <person name="Touchman J.W."/>
            <person name="Blakesley R.W."/>
            <person name="Bouffard G.G."/>
            <person name="Beckstrom-Sternberg S.M."/>
            <person name="Margulies E.H."/>
            <person name="Blanchette M."/>
            <person name="Siepel A.C."/>
            <person name="Thomas P.J."/>
            <person name="McDowell J.C."/>
            <person name="Maskeri B."/>
            <person name="Hansen N.F."/>
            <person name="Schwartz M.S."/>
            <person name="Weber R.J."/>
            <person name="Kent W.J."/>
            <person name="Karolchik D."/>
            <person name="Bruen T.C."/>
            <person name="Bevan R."/>
            <person name="Cutler D.J."/>
            <person name="Schwartz S."/>
            <person name="Elnitski L."/>
            <person name="Idol J.R."/>
            <person name="Prasad A.B."/>
            <person name="Lee-Lin S.-Q."/>
            <person name="Maduro V.V.B."/>
            <person name="Summers T.J."/>
            <person name="Portnoy M.E."/>
            <person name="Dietrich N.L."/>
            <person name="Akhter N."/>
            <person name="Ayele K."/>
            <person name="Benjamin B."/>
            <person name="Cariaga K."/>
            <person name="Brinkley C.P."/>
            <person name="Brooks S.Y."/>
            <person name="Granite S."/>
            <person name="Guan X."/>
            <person name="Gupta J."/>
            <person name="Haghighi P."/>
            <person name="Ho S.-L."/>
            <person name="Huang M.C."/>
            <person name="Karlins E."/>
            <person name="Laric P.L."/>
            <person name="Legaspi R."/>
            <person name="Lim M.J."/>
            <person name="Maduro Q.L."/>
            <person name="Masiello C.A."/>
            <person name="Mastrian S.D."/>
            <person name="McCloskey J.C."/>
            <person name="Pearson R."/>
            <person name="Stantripop S."/>
            <person name="Tiongson E.E."/>
            <person name="Tran J.T."/>
            <person name="Tsurgeon C."/>
            <person name="Vogt J.L."/>
            <person name="Walker M.A."/>
            <person name="Wetherby K.D."/>
            <person name="Wiggins L.S."/>
            <person name="Young A.C."/>
            <person name="Zhang L.-H."/>
            <person name="Osoegawa K."/>
            <person name="Zhu B."/>
            <person name="Zhao B."/>
            <person name="Shu C.L."/>
            <person name="De Jong P.J."/>
            <person name="Lawrence C.E."/>
            <person name="Smit A.F."/>
            <person name="Chakravarti A."/>
            <person name="Haussler D."/>
            <person name="Green P."/>
            <person name="Miller W."/>
            <person name="Green E.D."/>
        </authorList>
    </citation>
    <scope>NUCLEOTIDE SEQUENCE [LARGE SCALE GENOMIC DNA]</scope>
</reference>
<sequence>MAAGALRGLPVAGGGESSESEDDGWEIGYLDRTSQKLKGLLPIEEKKEKFKKAMTIGDVSLVQELLDSGISVDSTFQYGWTPLMYAASVANAELVRVLLDRGANASFEKDKQTILITACSAHGSEEQILKCVELLLSRNADPNVACRRLMTPIMYAARDGHTQVVALLVAHGAEVNTQDENGYTALTWAARQGHKNIVLKLLELGANKMLQTKDGKMPSEIAKRNKHHEIFNLLSFTLNPLEGKLQQLTKEDTICKILTTDSDREKDHIFSSYTAFGDLEVFLHGIGLEHMTDLLKERDITLRHLLTMREDEFTKNGITSKDQQKILAALKELQVEEIQFGELSEEIKLEISGDEFLNFLLKLNKQCGHLITAVQNIITELPVNSQKITLEWASPRNFTSVCEELVNNAEDLSEEVCKLKDLIQKLQNERENDPTHIQLREEVSTWNSRILKRTAITVCGFGFLLFICKLTFQRK</sequence>
<protein>
    <recommendedName>
        <fullName>Ankyrin repeat, SAM and basic leucine zipper domain-containing protein 1</fullName>
    </recommendedName>
    <alternativeName>
        <fullName>Germ cell-specific ankyrin, SAM and basic leucine zipper domain-containing protein</fullName>
    </alternativeName>
</protein>
<feature type="chain" id="PRO_0000226358" description="Ankyrin repeat, SAM and basic leucine zipper domain-containing protein 1">
    <location>
        <begin position="1"/>
        <end position="475"/>
    </location>
</feature>
<feature type="repeat" description="ANK 1">
    <location>
        <begin position="45"/>
        <end position="74"/>
    </location>
</feature>
<feature type="repeat" description="ANK 2">
    <location>
        <begin position="78"/>
        <end position="107"/>
    </location>
</feature>
<feature type="repeat" description="ANK 3">
    <location>
        <begin position="110"/>
        <end position="144"/>
    </location>
</feature>
<feature type="repeat" description="ANK 4">
    <location>
        <begin position="148"/>
        <end position="177"/>
    </location>
</feature>
<feature type="repeat" description="ANK 5">
    <location>
        <begin position="181"/>
        <end position="210"/>
    </location>
</feature>
<feature type="repeat" description="ANK 6">
    <location>
        <begin position="214"/>
        <end position="243"/>
    </location>
</feature>
<feature type="domain" description="SAM">
    <location>
        <begin position="272"/>
        <end position="334"/>
    </location>
</feature>
<feature type="region of interest" description="Disordered" evidence="3">
    <location>
        <begin position="1"/>
        <end position="25"/>
    </location>
</feature>
<feature type="modified residue" description="Phosphoserine" evidence="2">
    <location>
        <position position="17"/>
    </location>
</feature>
<feature type="modified residue" description="Phosphoserine" evidence="2">
    <location>
        <position position="18"/>
    </location>
</feature>
<feature type="modified residue" description="Phosphoserine" evidence="2">
    <location>
        <position position="20"/>
    </location>
</feature>
<proteinExistence type="evidence at transcript level"/>
<evidence type="ECO:0000250" key="1"/>
<evidence type="ECO:0000250" key="2">
    <source>
        <dbReference type="UniProtKB" id="Q8VD46"/>
    </source>
</evidence>
<evidence type="ECO:0000256" key="3">
    <source>
        <dbReference type="SAM" id="MobiDB-lite"/>
    </source>
</evidence>
<comment type="function">
    <text evidence="1">Plays a central role during spermatogenesis by repressing transposable elements and preventing their mobilization, which is essential for the germline integrity. Acts via the piRNA metabolic process, which mediates the repression of transposable elements during meiosis by forming complexes composed of piRNAs and Piwi proteins and governs the methylation and subsequent repression of transposons. Its association with pi-bodies suggests a participation in the primary piRNAs metabolic process. Required prior to the pachytene stage to facilitate the production of multiple types of piRNAs, including those associated with repeats involved in the regulation of retrotransposons. May act by mediating protein-protein interactions during germ cell maturation (By similarity).</text>
</comment>
<comment type="subunit">
    <text evidence="1">Interacts with DDX4, PIWIL1, RANBP9 and TDRD1.</text>
</comment>
<comment type="subcellular location">
    <subcellularLocation>
        <location evidence="1">Cytoplasm</location>
    </subcellularLocation>
    <text evidence="1">Component of the meiotic nuage, also named P granule, a germ-cell-specific organelle required to repress transposon activity during meiosis. Specifically localizes to pi-bodies, a subset of the nuage which contains primary piRNAs (By similarity).</text>
</comment>
<gene>
    <name type="primary">ASZ1</name>
    <name type="synonym">GASZ</name>
</gene>
<dbReference type="EMBL" id="AF461262">
    <property type="protein sequence ID" value="AAL68818.1"/>
    <property type="molecule type" value="mRNA"/>
</dbReference>
<dbReference type="EMBL" id="DP000233">
    <property type="protein sequence ID" value="AAR16226.1"/>
    <property type="molecule type" value="Genomic_DNA"/>
</dbReference>
<dbReference type="RefSeq" id="NP_001106084.1">
    <property type="nucleotide sequence ID" value="NM_001112614.1"/>
</dbReference>
<dbReference type="SMR" id="Q8WMX7"/>
<dbReference type="STRING" id="9555.ENSPANP00000018314"/>
<dbReference type="Ensembl" id="ENSPANT00000019014.3">
    <property type="protein sequence ID" value="ENSPANP00000018314.1"/>
    <property type="gene ID" value="ENSPANG00000016260.3"/>
</dbReference>
<dbReference type="GeneID" id="100126665"/>
<dbReference type="KEGG" id="panu:100126665"/>
<dbReference type="CTD" id="136991"/>
<dbReference type="eggNOG" id="KOG0504">
    <property type="taxonomic scope" value="Eukaryota"/>
</dbReference>
<dbReference type="GeneTree" id="ENSGT00880000138051"/>
<dbReference type="HOGENOM" id="CLU_053259_0_0_1"/>
<dbReference type="OMA" id="PFMFACR"/>
<dbReference type="OrthoDB" id="8155at314294"/>
<dbReference type="Proteomes" id="UP000028761">
    <property type="component" value="Chromosome 4"/>
</dbReference>
<dbReference type="Bgee" id="ENSPANG00000016260">
    <property type="expression patterns" value="Expressed in testis"/>
</dbReference>
<dbReference type="GO" id="GO:0071546">
    <property type="term" value="C:pi-body"/>
    <property type="evidence" value="ECO:0000250"/>
    <property type="project" value="UniProtKB"/>
</dbReference>
<dbReference type="GO" id="GO:0030154">
    <property type="term" value="P:cell differentiation"/>
    <property type="evidence" value="ECO:0007669"/>
    <property type="project" value="UniProtKB-KW"/>
</dbReference>
<dbReference type="GO" id="GO:0007140">
    <property type="term" value="P:male meiotic nuclear division"/>
    <property type="evidence" value="ECO:0000250"/>
    <property type="project" value="UniProtKB"/>
</dbReference>
<dbReference type="GO" id="GO:0031047">
    <property type="term" value="P:regulatory ncRNA-mediated gene silencing"/>
    <property type="evidence" value="ECO:0007669"/>
    <property type="project" value="UniProtKB-KW"/>
</dbReference>
<dbReference type="GO" id="GO:0007283">
    <property type="term" value="P:spermatogenesis"/>
    <property type="evidence" value="ECO:0000250"/>
    <property type="project" value="UniProtKB"/>
</dbReference>
<dbReference type="GO" id="GO:0010526">
    <property type="term" value="P:transposable element silencing"/>
    <property type="evidence" value="ECO:0000250"/>
    <property type="project" value="UniProtKB"/>
</dbReference>
<dbReference type="CDD" id="cd09521">
    <property type="entry name" value="SAM_ASZ1"/>
    <property type="match status" value="1"/>
</dbReference>
<dbReference type="FunFam" id="1.25.40.20:FF:000192">
    <property type="entry name" value="Ankyrin repeat, SAM and basic leucine zipper domain-containing 1"/>
    <property type="match status" value="1"/>
</dbReference>
<dbReference type="FunFam" id="1.10.150.50:FF:000060">
    <property type="entry name" value="Ankyrin repeat, SAM and basic leucine zipper domain-containing protein 1"/>
    <property type="match status" value="1"/>
</dbReference>
<dbReference type="Gene3D" id="1.25.40.20">
    <property type="entry name" value="Ankyrin repeat-containing domain"/>
    <property type="match status" value="1"/>
</dbReference>
<dbReference type="Gene3D" id="1.10.150.50">
    <property type="entry name" value="Transcription Factor, Ets-1"/>
    <property type="match status" value="1"/>
</dbReference>
<dbReference type="InterPro" id="IPR002110">
    <property type="entry name" value="Ankyrin_rpt"/>
</dbReference>
<dbReference type="InterPro" id="IPR036770">
    <property type="entry name" value="Ankyrin_rpt-contain_sf"/>
</dbReference>
<dbReference type="InterPro" id="IPR042650">
    <property type="entry name" value="Asz1_SAM"/>
</dbReference>
<dbReference type="InterPro" id="IPR001660">
    <property type="entry name" value="SAM"/>
</dbReference>
<dbReference type="InterPro" id="IPR013761">
    <property type="entry name" value="SAM/pointed_sf"/>
</dbReference>
<dbReference type="PANTHER" id="PTHR24157">
    <property type="entry name" value="ANKYRIN REPEAT, SAM AND BASIC LEUCINE ZIPPER DOMAIN-CONTAINING PROTEIN 1"/>
    <property type="match status" value="1"/>
</dbReference>
<dbReference type="PANTHER" id="PTHR24157:SF3">
    <property type="entry name" value="ANKYRIN REPEAT, SAM AND BASIC LEUCINE ZIPPER DOMAIN-CONTAINING PROTEIN 1"/>
    <property type="match status" value="1"/>
</dbReference>
<dbReference type="Pfam" id="PF00023">
    <property type="entry name" value="Ank"/>
    <property type="match status" value="1"/>
</dbReference>
<dbReference type="Pfam" id="PF12796">
    <property type="entry name" value="Ank_2"/>
    <property type="match status" value="1"/>
</dbReference>
<dbReference type="Pfam" id="PF07647">
    <property type="entry name" value="SAM_2"/>
    <property type="match status" value="1"/>
</dbReference>
<dbReference type="PRINTS" id="PR01415">
    <property type="entry name" value="ANKYRIN"/>
</dbReference>
<dbReference type="SMART" id="SM00248">
    <property type="entry name" value="ANK"/>
    <property type="match status" value="5"/>
</dbReference>
<dbReference type="SUPFAM" id="SSF48403">
    <property type="entry name" value="Ankyrin repeat"/>
    <property type="match status" value="1"/>
</dbReference>
<dbReference type="SUPFAM" id="SSF140860">
    <property type="entry name" value="Pseudo ankyrin repeat-like"/>
    <property type="match status" value="1"/>
</dbReference>
<dbReference type="SUPFAM" id="SSF47769">
    <property type="entry name" value="SAM/Pointed domain"/>
    <property type="match status" value="1"/>
</dbReference>
<dbReference type="PROSITE" id="PS50297">
    <property type="entry name" value="ANK_REP_REGION"/>
    <property type="match status" value="1"/>
</dbReference>
<dbReference type="PROSITE" id="PS50088">
    <property type="entry name" value="ANK_REPEAT"/>
    <property type="match status" value="3"/>
</dbReference>
<accession>Q8WMX7</accession>
<accession>A0M8S2</accession>